<evidence type="ECO:0000255" key="1">
    <source>
        <dbReference type="HAMAP-Rule" id="MF_00915"/>
    </source>
</evidence>
<proteinExistence type="inferred from homology"/>
<feature type="signal peptide" description="Tat-type signal" evidence="1">
    <location>
        <begin position="1"/>
        <end position="28"/>
    </location>
</feature>
<feature type="chain" id="PRO_5000259028" description="Cell division protein FtsP">
    <location>
        <begin position="29"/>
        <end position="466"/>
    </location>
</feature>
<accession>A6VR21</accession>
<keyword id="KW-0131">Cell cycle</keyword>
<keyword id="KW-0132">Cell division</keyword>
<keyword id="KW-0574">Periplasm</keyword>
<keyword id="KW-1185">Reference proteome</keyword>
<keyword id="KW-0732">Signal</keyword>
<gene>
    <name evidence="1" type="primary">ftsP</name>
    <name type="ordered locus">Asuc_2072</name>
</gene>
<dbReference type="EMBL" id="CP000746">
    <property type="protein sequence ID" value="ABR75418.1"/>
    <property type="molecule type" value="Genomic_DNA"/>
</dbReference>
<dbReference type="SMR" id="A6VR21"/>
<dbReference type="STRING" id="339671.Asuc_2072"/>
<dbReference type="KEGG" id="asu:Asuc_2072"/>
<dbReference type="eggNOG" id="COG2132">
    <property type="taxonomic scope" value="Bacteria"/>
</dbReference>
<dbReference type="HOGENOM" id="CLU_009100_2_4_6"/>
<dbReference type="Proteomes" id="UP000001114">
    <property type="component" value="Chromosome"/>
</dbReference>
<dbReference type="GO" id="GO:0032153">
    <property type="term" value="C:cell division site"/>
    <property type="evidence" value="ECO:0007669"/>
    <property type="project" value="UniProtKB-UniRule"/>
</dbReference>
<dbReference type="GO" id="GO:0030288">
    <property type="term" value="C:outer membrane-bounded periplasmic space"/>
    <property type="evidence" value="ECO:0007669"/>
    <property type="project" value="UniProtKB-UniRule"/>
</dbReference>
<dbReference type="GO" id="GO:0005507">
    <property type="term" value="F:copper ion binding"/>
    <property type="evidence" value="ECO:0007669"/>
    <property type="project" value="InterPro"/>
</dbReference>
<dbReference type="GO" id="GO:0043093">
    <property type="term" value="P:FtsZ-dependent cytokinesis"/>
    <property type="evidence" value="ECO:0007669"/>
    <property type="project" value="UniProtKB-UniRule"/>
</dbReference>
<dbReference type="CDD" id="cd13867">
    <property type="entry name" value="CuRO_2_CueO_FtsP"/>
    <property type="match status" value="1"/>
</dbReference>
<dbReference type="CDD" id="cd13890">
    <property type="entry name" value="CuRO_3_CueO_FtsP"/>
    <property type="match status" value="1"/>
</dbReference>
<dbReference type="Gene3D" id="2.60.40.420">
    <property type="entry name" value="Cupredoxins - blue copper proteins"/>
    <property type="match status" value="3"/>
</dbReference>
<dbReference type="HAMAP" id="MF_00915">
    <property type="entry name" value="FtsP"/>
    <property type="match status" value="1"/>
</dbReference>
<dbReference type="InterPro" id="IPR011707">
    <property type="entry name" value="Cu-oxidase-like_N"/>
</dbReference>
<dbReference type="InterPro" id="IPR045087">
    <property type="entry name" value="Cu-oxidase_fam"/>
</dbReference>
<dbReference type="InterPro" id="IPR008972">
    <property type="entry name" value="Cupredoxin"/>
</dbReference>
<dbReference type="InterPro" id="IPR026589">
    <property type="entry name" value="FtsP"/>
</dbReference>
<dbReference type="PANTHER" id="PTHR48267:SF1">
    <property type="entry name" value="BILIRUBIN OXIDASE"/>
    <property type="match status" value="1"/>
</dbReference>
<dbReference type="PANTHER" id="PTHR48267">
    <property type="entry name" value="CUPREDOXIN SUPERFAMILY PROTEIN"/>
    <property type="match status" value="1"/>
</dbReference>
<dbReference type="Pfam" id="PF07732">
    <property type="entry name" value="Cu-oxidase_3"/>
    <property type="match status" value="1"/>
</dbReference>
<dbReference type="SUPFAM" id="SSF49503">
    <property type="entry name" value="Cupredoxins"/>
    <property type="match status" value="3"/>
</dbReference>
<name>FTSP_ACTSZ</name>
<comment type="function">
    <text evidence="1">Cell division protein that is required for growth during stress conditions. May be involved in protecting or stabilizing the divisomal assembly under conditions of stress.</text>
</comment>
<comment type="subcellular location">
    <subcellularLocation>
        <location evidence="1">Periplasm</location>
    </subcellularLocation>
    <text evidence="1">Localizes to the division septum.</text>
</comment>
<comment type="PTM">
    <text>Predicted to be exported by the Tat system. The position of the signal peptide cleavage has not been experimentally proven.</text>
</comment>
<comment type="similarity">
    <text evidence="1">Belongs to the FtsP family.</text>
</comment>
<organism>
    <name type="scientific">Actinobacillus succinogenes (strain ATCC 55618 / DSM 22257 / CCUG 43843 / 130Z)</name>
    <dbReference type="NCBI Taxonomy" id="339671"/>
    <lineage>
        <taxon>Bacteria</taxon>
        <taxon>Pseudomonadati</taxon>
        <taxon>Pseudomonadota</taxon>
        <taxon>Gammaproteobacteria</taxon>
        <taxon>Pasteurellales</taxon>
        <taxon>Pasteurellaceae</taxon>
        <taxon>Actinobacillus</taxon>
    </lineage>
</organism>
<sequence length="466" mass="52026">MNYSRRSLFKKTLIATALSALPATLLAATKQPLVIPPLIESRRGKPVFLGLESAQVKLIDDKLVEVWGFNGQYLGPTVRVRQGDFVKLNYRNNLPHSVAMNIQGLQTNSNILGGIGHSLKPQQGWSPIVPITQPAATCYYHSCSLASSAYQNYRGLAGMWIIEDDESRQAQLPNKYGVNDIPLILQDLHLNKEGSQLFRQNEPHFYGDRLFVNGQEAPFINVGRGWIRLRILNASVSRSYPLQFDDERAFLLIAKDQGFLPEAKTVKSVLVGMGERVEILVDLNEGGNVSLIVGKKRSFLDKIDLFFNDNGELTDNTVLELRPEGLLSVFNGKPSYRFSAVATLPSQILQERAFHFDAENAMINNKRFDPRRIDVNAKQGSAERWTLSATNAMGFRIQGAKFVVESRDDVATPGNELVWQDTLWFERTAKILVKFEHSASNSQPFTFGSSDLMQADKGALGLIVVQ</sequence>
<protein>
    <recommendedName>
        <fullName evidence="1">Cell division protein FtsP</fullName>
    </recommendedName>
</protein>
<reference key="1">
    <citation type="journal article" date="2010" name="BMC Genomics">
        <title>A genomic perspective on the potential of Actinobacillus succinogenes for industrial succinate production.</title>
        <authorList>
            <person name="McKinlay J.B."/>
            <person name="Laivenieks M."/>
            <person name="Schindler B.D."/>
            <person name="McKinlay A.A."/>
            <person name="Siddaramappa S."/>
            <person name="Challacombe J.F."/>
            <person name="Lowry S.R."/>
            <person name="Clum A."/>
            <person name="Lapidus A.L."/>
            <person name="Burkhart K.B."/>
            <person name="Harkins V."/>
            <person name="Vieille C."/>
        </authorList>
    </citation>
    <scope>NUCLEOTIDE SEQUENCE [LARGE SCALE GENOMIC DNA]</scope>
    <source>
        <strain>ATCC 55618 / DSM 22257 / CCUG 43843 / 130Z</strain>
    </source>
</reference>